<organism>
    <name type="scientific">Rhodopseudomonas palustris (strain ATCC BAA-98 / CGA009)</name>
    <dbReference type="NCBI Taxonomy" id="258594"/>
    <lineage>
        <taxon>Bacteria</taxon>
        <taxon>Pseudomonadati</taxon>
        <taxon>Pseudomonadota</taxon>
        <taxon>Alphaproteobacteria</taxon>
        <taxon>Hyphomicrobiales</taxon>
        <taxon>Nitrobacteraceae</taxon>
        <taxon>Rhodopseudomonas</taxon>
    </lineage>
</organism>
<dbReference type="EMBL" id="BX572601">
    <property type="protein sequence ID" value="CAE28209.1"/>
    <property type="molecule type" value="Genomic_DNA"/>
</dbReference>
<dbReference type="RefSeq" id="WP_011158318.1">
    <property type="nucleotide sequence ID" value="NZ_CP116810.1"/>
</dbReference>
<dbReference type="SMR" id="Q6N651"/>
<dbReference type="IntAct" id="Q6N651">
    <property type="interactions" value="1"/>
</dbReference>
<dbReference type="STRING" id="258594.RPA2767"/>
<dbReference type="GeneID" id="66893844"/>
<dbReference type="eggNOG" id="COG0102">
    <property type="taxonomic scope" value="Bacteria"/>
</dbReference>
<dbReference type="HOGENOM" id="CLU_082184_2_0_5"/>
<dbReference type="PhylomeDB" id="Q6N651"/>
<dbReference type="GO" id="GO:0022625">
    <property type="term" value="C:cytosolic large ribosomal subunit"/>
    <property type="evidence" value="ECO:0007669"/>
    <property type="project" value="TreeGrafter"/>
</dbReference>
<dbReference type="GO" id="GO:0003729">
    <property type="term" value="F:mRNA binding"/>
    <property type="evidence" value="ECO:0007669"/>
    <property type="project" value="TreeGrafter"/>
</dbReference>
<dbReference type="GO" id="GO:0003735">
    <property type="term" value="F:structural constituent of ribosome"/>
    <property type="evidence" value="ECO:0007669"/>
    <property type="project" value="InterPro"/>
</dbReference>
<dbReference type="GO" id="GO:0017148">
    <property type="term" value="P:negative regulation of translation"/>
    <property type="evidence" value="ECO:0007669"/>
    <property type="project" value="TreeGrafter"/>
</dbReference>
<dbReference type="GO" id="GO:0006412">
    <property type="term" value="P:translation"/>
    <property type="evidence" value="ECO:0007669"/>
    <property type="project" value="UniProtKB-UniRule"/>
</dbReference>
<dbReference type="CDD" id="cd00392">
    <property type="entry name" value="Ribosomal_L13"/>
    <property type="match status" value="1"/>
</dbReference>
<dbReference type="FunFam" id="3.90.1180.10:FF:000001">
    <property type="entry name" value="50S ribosomal protein L13"/>
    <property type="match status" value="1"/>
</dbReference>
<dbReference type="Gene3D" id="3.90.1180.10">
    <property type="entry name" value="Ribosomal protein L13"/>
    <property type="match status" value="1"/>
</dbReference>
<dbReference type="HAMAP" id="MF_01366">
    <property type="entry name" value="Ribosomal_uL13"/>
    <property type="match status" value="1"/>
</dbReference>
<dbReference type="InterPro" id="IPR005822">
    <property type="entry name" value="Ribosomal_uL13"/>
</dbReference>
<dbReference type="InterPro" id="IPR005823">
    <property type="entry name" value="Ribosomal_uL13_bac-type"/>
</dbReference>
<dbReference type="InterPro" id="IPR036899">
    <property type="entry name" value="Ribosomal_uL13_sf"/>
</dbReference>
<dbReference type="NCBIfam" id="TIGR01066">
    <property type="entry name" value="rplM_bact"/>
    <property type="match status" value="1"/>
</dbReference>
<dbReference type="PANTHER" id="PTHR11545:SF2">
    <property type="entry name" value="LARGE RIBOSOMAL SUBUNIT PROTEIN UL13M"/>
    <property type="match status" value="1"/>
</dbReference>
<dbReference type="PANTHER" id="PTHR11545">
    <property type="entry name" value="RIBOSOMAL PROTEIN L13"/>
    <property type="match status" value="1"/>
</dbReference>
<dbReference type="Pfam" id="PF00572">
    <property type="entry name" value="Ribosomal_L13"/>
    <property type="match status" value="1"/>
</dbReference>
<dbReference type="PIRSF" id="PIRSF002181">
    <property type="entry name" value="Ribosomal_L13"/>
    <property type="match status" value="1"/>
</dbReference>
<dbReference type="SUPFAM" id="SSF52161">
    <property type="entry name" value="Ribosomal protein L13"/>
    <property type="match status" value="1"/>
</dbReference>
<sequence length="154" mass="17173">MKTFSAKPAEVTKKWVIIDATGLVVGRLATLVAMRLRGKHLPTYTPHVDCGDNVIIINASKVVLTGRKRDNKVYYHHTGFIGGIKERSAKAILEGRFPERVVEKAIERMIPRGPLGRVQMGNLRVYPGAEHPHEAQQPEKLDIGAMNRKNMRAA</sequence>
<comment type="function">
    <text evidence="1">This protein is one of the early assembly proteins of the 50S ribosomal subunit, although it is not seen to bind rRNA by itself. It is important during the early stages of 50S assembly.</text>
</comment>
<comment type="subunit">
    <text evidence="1">Part of the 50S ribosomal subunit.</text>
</comment>
<comment type="similarity">
    <text evidence="1">Belongs to the universal ribosomal protein uL13 family.</text>
</comment>
<protein>
    <recommendedName>
        <fullName evidence="1">Large ribosomal subunit protein uL13</fullName>
    </recommendedName>
    <alternativeName>
        <fullName evidence="2">50S ribosomal protein L13</fullName>
    </alternativeName>
    <alternativeName>
        <fullName>RRP-L13</fullName>
    </alternativeName>
</protein>
<proteinExistence type="evidence at protein level"/>
<gene>
    <name evidence="1" type="primary">rplM</name>
    <name type="ordered locus">RPA2767</name>
</gene>
<feature type="chain" id="PRO_0000223973" description="Large ribosomal subunit protein uL13">
    <location>
        <begin position="1"/>
        <end position="154"/>
    </location>
</feature>
<accession>Q6N651</accession>
<evidence type="ECO:0000255" key="1">
    <source>
        <dbReference type="HAMAP-Rule" id="MF_01366"/>
    </source>
</evidence>
<evidence type="ECO:0000305" key="2"/>
<name>RL13_RHOPA</name>
<keyword id="KW-0687">Ribonucleoprotein</keyword>
<keyword id="KW-0689">Ribosomal protein</keyword>
<reference key="1">
    <citation type="journal article" date="2004" name="Nat. Biotechnol.">
        <title>Complete genome sequence of the metabolically versatile photosynthetic bacterium Rhodopseudomonas palustris.</title>
        <authorList>
            <person name="Larimer F.W."/>
            <person name="Chain P."/>
            <person name="Hauser L."/>
            <person name="Lamerdin J.E."/>
            <person name="Malfatti S."/>
            <person name="Do L."/>
            <person name="Land M.L."/>
            <person name="Pelletier D.A."/>
            <person name="Beatty J.T."/>
            <person name="Lang A.S."/>
            <person name="Tabita F.R."/>
            <person name="Gibson J.L."/>
            <person name="Hanson T.E."/>
            <person name="Bobst C."/>
            <person name="Torres y Torres J.L."/>
            <person name="Peres C."/>
            <person name="Harrison F.H."/>
            <person name="Gibson J."/>
            <person name="Harwood C.S."/>
        </authorList>
    </citation>
    <scope>NUCLEOTIDE SEQUENCE [LARGE SCALE GENOMIC DNA]</scope>
    <source>
        <strain>ATCC BAA-98 / CGA009</strain>
    </source>
</reference>
<reference key="2">
    <citation type="journal article" date="2004" name="J. Proteome Res.">
        <title>Characterization of the 70S ribosome from Rhodopseudomonas palustris using an integrated 'top-down' and 'bottom-up' mass spectrometric approach.</title>
        <authorList>
            <person name="Strader M.B."/>
            <person name="VerBerkmoes N.C."/>
            <person name="Tabb D.L."/>
            <person name="Connelly H.M."/>
            <person name="Barton J.W."/>
            <person name="Bruce B.D."/>
            <person name="Pelletier D.A."/>
            <person name="Davison B.H."/>
            <person name="Hettich R.L."/>
            <person name="Larimer F.W."/>
            <person name="Hurst G.B."/>
        </authorList>
    </citation>
    <scope>IDENTIFICATION BY MASS SPECTROMETRY</scope>
    <source>
        <strain>ATCC BAA-98 / CGA009</strain>
    </source>
</reference>